<dbReference type="EMBL" id="CP000462">
    <property type="protein sequence ID" value="ABK37930.1"/>
    <property type="molecule type" value="Genomic_DNA"/>
</dbReference>
<dbReference type="RefSeq" id="YP_854693.1">
    <property type="nucleotide sequence ID" value="NC_008570.1"/>
</dbReference>
<dbReference type="SMR" id="A0KEM8"/>
<dbReference type="STRING" id="380703.AHA_0160"/>
<dbReference type="EnsemblBacteria" id="ABK37930">
    <property type="protein sequence ID" value="ABK37930"/>
    <property type="gene ID" value="AHA_0160"/>
</dbReference>
<dbReference type="GeneID" id="4487423"/>
<dbReference type="KEGG" id="aha:AHA_0160"/>
<dbReference type="PATRIC" id="fig|380703.7.peg.150"/>
<dbReference type="eggNOG" id="COG2003">
    <property type="taxonomic scope" value="Bacteria"/>
</dbReference>
<dbReference type="HOGENOM" id="CLU_073529_0_1_6"/>
<dbReference type="OrthoDB" id="9804482at2"/>
<dbReference type="Proteomes" id="UP000000756">
    <property type="component" value="Chromosome"/>
</dbReference>
<dbReference type="GO" id="GO:0046872">
    <property type="term" value="F:metal ion binding"/>
    <property type="evidence" value="ECO:0007669"/>
    <property type="project" value="UniProtKB-KW"/>
</dbReference>
<dbReference type="GO" id="GO:0008237">
    <property type="term" value="F:metallopeptidase activity"/>
    <property type="evidence" value="ECO:0007669"/>
    <property type="project" value="UniProtKB-KW"/>
</dbReference>
<dbReference type="GO" id="GO:0006508">
    <property type="term" value="P:proteolysis"/>
    <property type="evidence" value="ECO:0007669"/>
    <property type="project" value="UniProtKB-KW"/>
</dbReference>
<dbReference type="CDD" id="cd08071">
    <property type="entry name" value="MPN_DUF2466"/>
    <property type="match status" value="1"/>
</dbReference>
<dbReference type="FunFam" id="3.40.140.10:FF:000032">
    <property type="entry name" value="DNA repair protein RadC"/>
    <property type="match status" value="1"/>
</dbReference>
<dbReference type="Gene3D" id="1.10.150.20">
    <property type="entry name" value="5' to 3' exonuclease, C-terminal subdomain"/>
    <property type="match status" value="1"/>
</dbReference>
<dbReference type="Gene3D" id="3.40.140.10">
    <property type="entry name" value="Cytidine Deaminase, domain 2"/>
    <property type="match status" value="1"/>
</dbReference>
<dbReference type="InterPro" id="IPR037518">
    <property type="entry name" value="MPN"/>
</dbReference>
<dbReference type="InterPro" id="IPR025657">
    <property type="entry name" value="RadC_JAB"/>
</dbReference>
<dbReference type="InterPro" id="IPR010994">
    <property type="entry name" value="RuvA_2-like"/>
</dbReference>
<dbReference type="InterPro" id="IPR001405">
    <property type="entry name" value="UPF0758"/>
</dbReference>
<dbReference type="InterPro" id="IPR020891">
    <property type="entry name" value="UPF0758_CS"/>
</dbReference>
<dbReference type="InterPro" id="IPR046778">
    <property type="entry name" value="UPF0758_N"/>
</dbReference>
<dbReference type="NCBIfam" id="NF000642">
    <property type="entry name" value="PRK00024.1"/>
    <property type="match status" value="1"/>
</dbReference>
<dbReference type="NCBIfam" id="TIGR00608">
    <property type="entry name" value="radc"/>
    <property type="match status" value="1"/>
</dbReference>
<dbReference type="PANTHER" id="PTHR30471">
    <property type="entry name" value="DNA REPAIR PROTEIN RADC"/>
    <property type="match status" value="1"/>
</dbReference>
<dbReference type="PANTHER" id="PTHR30471:SF3">
    <property type="entry name" value="UPF0758 PROTEIN YEES-RELATED"/>
    <property type="match status" value="1"/>
</dbReference>
<dbReference type="Pfam" id="PF04002">
    <property type="entry name" value="RadC"/>
    <property type="match status" value="1"/>
</dbReference>
<dbReference type="Pfam" id="PF20582">
    <property type="entry name" value="UPF0758_N"/>
    <property type="match status" value="1"/>
</dbReference>
<dbReference type="SUPFAM" id="SSF102712">
    <property type="entry name" value="JAB1/MPN domain"/>
    <property type="match status" value="1"/>
</dbReference>
<dbReference type="SUPFAM" id="SSF47781">
    <property type="entry name" value="RuvA domain 2-like"/>
    <property type="match status" value="1"/>
</dbReference>
<dbReference type="PROSITE" id="PS50249">
    <property type="entry name" value="MPN"/>
    <property type="match status" value="1"/>
</dbReference>
<dbReference type="PROSITE" id="PS01302">
    <property type="entry name" value="UPF0758"/>
    <property type="match status" value="1"/>
</dbReference>
<comment type="similarity">
    <text evidence="2">Belongs to the UPF0758 family.</text>
</comment>
<evidence type="ECO:0000255" key="1">
    <source>
        <dbReference type="PROSITE-ProRule" id="PRU01182"/>
    </source>
</evidence>
<evidence type="ECO:0000305" key="2"/>
<organism>
    <name type="scientific">Aeromonas hydrophila subsp. hydrophila (strain ATCC 7966 / DSM 30187 / BCRC 13018 / CCUG 14551 / JCM 1027 / KCTC 2358 / NCIMB 9240 / NCTC 8049)</name>
    <dbReference type="NCBI Taxonomy" id="380703"/>
    <lineage>
        <taxon>Bacteria</taxon>
        <taxon>Pseudomonadati</taxon>
        <taxon>Pseudomonadota</taxon>
        <taxon>Gammaproteobacteria</taxon>
        <taxon>Aeromonadales</taxon>
        <taxon>Aeromonadaceae</taxon>
        <taxon>Aeromonas</taxon>
    </lineage>
</organism>
<gene>
    <name type="ordered locus">AHA_0160</name>
</gene>
<proteinExistence type="inferred from homology"/>
<protein>
    <recommendedName>
        <fullName>UPF0758 protein AHA_0160</fullName>
    </recommendedName>
</protein>
<keyword id="KW-0378">Hydrolase</keyword>
<keyword id="KW-0479">Metal-binding</keyword>
<keyword id="KW-0482">Metalloprotease</keyword>
<keyword id="KW-0645">Protease</keyword>
<keyword id="KW-1185">Reference proteome</keyword>
<keyword id="KW-0862">Zinc</keyword>
<feature type="chain" id="PRO_1000001641" description="UPF0758 protein AHA_0160">
    <location>
        <begin position="1"/>
        <end position="224"/>
    </location>
</feature>
<feature type="domain" description="MPN" evidence="1">
    <location>
        <begin position="102"/>
        <end position="224"/>
    </location>
</feature>
<feature type="short sequence motif" description="JAMM motif" evidence="1">
    <location>
        <begin position="173"/>
        <end position="186"/>
    </location>
</feature>
<feature type="binding site" evidence="1">
    <location>
        <position position="173"/>
    </location>
    <ligand>
        <name>Zn(2+)</name>
        <dbReference type="ChEBI" id="CHEBI:29105"/>
        <note>catalytic</note>
    </ligand>
</feature>
<feature type="binding site" evidence="1">
    <location>
        <position position="175"/>
    </location>
    <ligand>
        <name>Zn(2+)</name>
        <dbReference type="ChEBI" id="CHEBI:29105"/>
        <note>catalytic</note>
    </ligand>
</feature>
<feature type="binding site" evidence="1">
    <location>
        <position position="186"/>
    </location>
    <ligand>
        <name>Zn(2+)</name>
        <dbReference type="ChEBI" id="CHEBI:29105"/>
        <note>catalytic</note>
    </ligand>
</feature>
<name>Y160_AERHH</name>
<accession>A0KEM8</accession>
<sequence>MSIKEWPEDERPREKLLRQGPGGLSDAELLAIFLRTGVSGLSAVDLSRHLLQQFGSLRALLGAEQRAFCAAHGLGPAKYAQLQAVLEMGKRHLAEQLQRGDPLTSPQLTRDYLQAQLRDRPREVFALLLLDNQHRVIQFVELFYGTLDSASVWPREIVQIALKHNAAAVILAHNHPSGVAEPSRADRQITDRITAALALIDIRVLDHLVIGDGITVSFAERGWL</sequence>
<reference key="1">
    <citation type="journal article" date="2006" name="J. Bacteriol.">
        <title>Genome sequence of Aeromonas hydrophila ATCC 7966T: jack of all trades.</title>
        <authorList>
            <person name="Seshadri R."/>
            <person name="Joseph S.W."/>
            <person name="Chopra A.K."/>
            <person name="Sha J."/>
            <person name="Shaw J."/>
            <person name="Graf J."/>
            <person name="Haft D.H."/>
            <person name="Wu M."/>
            <person name="Ren Q."/>
            <person name="Rosovitz M.J."/>
            <person name="Madupu R."/>
            <person name="Tallon L."/>
            <person name="Kim M."/>
            <person name="Jin S."/>
            <person name="Vuong H."/>
            <person name="Stine O.C."/>
            <person name="Ali A."/>
            <person name="Horneman A.J."/>
            <person name="Heidelberg J.F."/>
        </authorList>
    </citation>
    <scope>NUCLEOTIDE SEQUENCE [LARGE SCALE GENOMIC DNA]</scope>
    <source>
        <strain>ATCC 7966 / DSM 30187 / BCRC 13018 / CCUG 14551 / JCM 1027 / KCTC 2358 / NCIMB 9240 / NCTC 8049</strain>
    </source>
</reference>